<organism>
    <name type="scientific">Thermomonospora curvata (strain ATCC 19995 / DSM 43183 / JCM 3096 / KCTC 9072 / NBRC 15933 / NCIMB 10081 / Henssen B9)</name>
    <dbReference type="NCBI Taxonomy" id="471852"/>
    <lineage>
        <taxon>Bacteria</taxon>
        <taxon>Bacillati</taxon>
        <taxon>Actinomycetota</taxon>
        <taxon>Actinomycetes</taxon>
        <taxon>Streptosporangiales</taxon>
        <taxon>Thermomonosporaceae</taxon>
        <taxon>Thermomonospora</taxon>
    </lineage>
</organism>
<feature type="chain" id="PRO_0000400309" description="Mycothiol acetyltransferase">
    <location>
        <begin position="1"/>
        <end position="297"/>
    </location>
</feature>
<feature type="domain" description="N-acetyltransferase 1" evidence="1">
    <location>
        <begin position="7"/>
        <end position="156"/>
    </location>
</feature>
<feature type="domain" description="N-acetyltransferase 2" evidence="1">
    <location>
        <begin position="153"/>
        <end position="297"/>
    </location>
</feature>
<feature type="binding site" evidence="1">
    <location>
        <position position="38"/>
    </location>
    <ligand>
        <name>1D-myo-inositol 2-(L-cysteinylamino)-2-deoxy-alpha-D-glucopyranoside</name>
        <dbReference type="ChEBI" id="CHEBI:58887"/>
    </ligand>
</feature>
<feature type="binding site" evidence="1">
    <location>
        <begin position="79"/>
        <end position="81"/>
    </location>
    <ligand>
        <name>acetyl-CoA</name>
        <dbReference type="ChEBI" id="CHEBI:57288"/>
        <label>1</label>
    </ligand>
</feature>
<feature type="binding site" evidence="1">
    <location>
        <position position="180"/>
    </location>
    <ligand>
        <name>1D-myo-inositol 2-(L-cysteinylamino)-2-deoxy-alpha-D-glucopyranoside</name>
        <dbReference type="ChEBI" id="CHEBI:58887"/>
    </ligand>
</feature>
<feature type="binding site" evidence="1">
    <location>
        <position position="219"/>
    </location>
    <ligand>
        <name>1D-myo-inositol 2-(L-cysteinylamino)-2-deoxy-alpha-D-glucopyranoside</name>
        <dbReference type="ChEBI" id="CHEBI:58887"/>
    </ligand>
</feature>
<feature type="binding site" evidence="1">
    <location>
        <position position="227"/>
    </location>
    <ligand>
        <name>1D-myo-inositol 2-(L-cysteinylamino)-2-deoxy-alpha-D-glucopyranoside</name>
        <dbReference type="ChEBI" id="CHEBI:58887"/>
    </ligand>
</feature>
<feature type="binding site" evidence="1">
    <location>
        <begin position="231"/>
        <end position="233"/>
    </location>
    <ligand>
        <name>acetyl-CoA</name>
        <dbReference type="ChEBI" id="CHEBI:57288"/>
        <label>2</label>
    </ligand>
</feature>
<feature type="binding site" evidence="1">
    <location>
        <begin position="238"/>
        <end position="244"/>
    </location>
    <ligand>
        <name>acetyl-CoA</name>
        <dbReference type="ChEBI" id="CHEBI:57288"/>
        <label>2</label>
    </ligand>
</feature>
<feature type="binding site" evidence="1">
    <location>
        <position position="265"/>
    </location>
    <ligand>
        <name>1D-myo-inositol 2-(L-cysteinylamino)-2-deoxy-alpha-D-glucopyranoside</name>
        <dbReference type="ChEBI" id="CHEBI:58887"/>
    </ligand>
</feature>
<feature type="binding site" evidence="1">
    <location>
        <begin position="270"/>
        <end position="275"/>
    </location>
    <ligand>
        <name>acetyl-CoA</name>
        <dbReference type="ChEBI" id="CHEBI:57288"/>
        <label>2</label>
    </ligand>
</feature>
<evidence type="ECO:0000255" key="1">
    <source>
        <dbReference type="HAMAP-Rule" id="MF_01698"/>
    </source>
</evidence>
<accession>D1A4F4</accession>
<reference key="1">
    <citation type="journal article" date="2011" name="Stand. Genomic Sci.">
        <title>Complete genome sequence of Thermomonospora curvata type strain (B9).</title>
        <authorList>
            <person name="Chertkov O."/>
            <person name="Sikorski J."/>
            <person name="Nolan M."/>
            <person name="Lapidus A."/>
            <person name="Lucas S."/>
            <person name="Del Rio T.G."/>
            <person name="Tice H."/>
            <person name="Cheng J.F."/>
            <person name="Goodwin L."/>
            <person name="Pitluck S."/>
            <person name="Liolios K."/>
            <person name="Ivanova N."/>
            <person name="Mavromatis K."/>
            <person name="Mikhailova N."/>
            <person name="Ovchinnikova G."/>
            <person name="Pati A."/>
            <person name="Chen A."/>
            <person name="Palaniappan K."/>
            <person name="Djao O.D."/>
            <person name="Land M."/>
            <person name="Hauser L."/>
            <person name="Chang Y.J."/>
            <person name="Jeffries C.D."/>
            <person name="Brettin T."/>
            <person name="Han C."/>
            <person name="Detter J.C."/>
            <person name="Rohde M."/>
            <person name="Goeker M."/>
            <person name="Woyke T."/>
            <person name="Bristow J."/>
            <person name="Eisen J.A."/>
            <person name="Markowitz V."/>
            <person name="Hugenholtz P."/>
            <person name="Klenk H.P."/>
            <person name="Kyrpides N.C."/>
        </authorList>
    </citation>
    <scope>NUCLEOTIDE SEQUENCE [LARGE SCALE GENOMIC DNA]</scope>
    <source>
        <strain>ATCC 19995 / DSM 43183 / JCM 3096 / KCTC 9072 / NBRC 15933 / NCIMB 10081 / Henssen B9</strain>
    </source>
</reference>
<comment type="function">
    <text evidence="1">Catalyzes the transfer of acetyl from acetyl-CoA to desacetylmycothiol (Cys-GlcN-Ins) to form mycothiol.</text>
</comment>
<comment type="catalytic activity">
    <reaction evidence="1">
        <text>1D-myo-inositol 2-(L-cysteinylamino)-2-deoxy-alpha-D-glucopyranoside + acetyl-CoA = mycothiol + CoA + H(+)</text>
        <dbReference type="Rhea" id="RHEA:26172"/>
        <dbReference type="ChEBI" id="CHEBI:15378"/>
        <dbReference type="ChEBI" id="CHEBI:16768"/>
        <dbReference type="ChEBI" id="CHEBI:57287"/>
        <dbReference type="ChEBI" id="CHEBI:57288"/>
        <dbReference type="ChEBI" id="CHEBI:58887"/>
        <dbReference type="EC" id="2.3.1.189"/>
    </reaction>
</comment>
<comment type="subunit">
    <text evidence="1">Monomer.</text>
</comment>
<comment type="similarity">
    <text evidence="1">Belongs to the acetyltransferase family. MshD subfamily.</text>
</comment>
<name>MSHD_THECD</name>
<protein>
    <recommendedName>
        <fullName evidence="1">Mycothiol acetyltransferase</fullName>
        <shortName evidence="1">MSH acetyltransferase</shortName>
        <ecNumber evidence="1">2.3.1.189</ecNumber>
    </recommendedName>
    <alternativeName>
        <fullName evidence="1">Mycothiol synthase</fullName>
    </alternativeName>
</protein>
<gene>
    <name evidence="1" type="primary">mshD</name>
    <name type="ordered locus">Tcur_0594</name>
</gene>
<dbReference type="EC" id="2.3.1.189" evidence="1"/>
<dbReference type="EMBL" id="CP001738">
    <property type="protein sequence ID" value="ACY96189.1"/>
    <property type="molecule type" value="Genomic_DNA"/>
</dbReference>
<dbReference type="RefSeq" id="WP_012850973.1">
    <property type="nucleotide sequence ID" value="NC_013510.1"/>
</dbReference>
<dbReference type="SMR" id="D1A4F4"/>
<dbReference type="STRING" id="471852.Tcur_0594"/>
<dbReference type="KEGG" id="tcu:Tcur_0594"/>
<dbReference type="eggNOG" id="COG0456">
    <property type="taxonomic scope" value="Bacteria"/>
</dbReference>
<dbReference type="HOGENOM" id="CLU_068014_0_0_11"/>
<dbReference type="OrthoDB" id="3208058at2"/>
<dbReference type="Proteomes" id="UP000001918">
    <property type="component" value="Chromosome"/>
</dbReference>
<dbReference type="GO" id="GO:0035447">
    <property type="term" value="F:mycothiol synthase activity"/>
    <property type="evidence" value="ECO:0007669"/>
    <property type="project" value="UniProtKB-UniRule"/>
</dbReference>
<dbReference type="GO" id="GO:0010125">
    <property type="term" value="P:mycothiol biosynthetic process"/>
    <property type="evidence" value="ECO:0007669"/>
    <property type="project" value="UniProtKB-UniRule"/>
</dbReference>
<dbReference type="CDD" id="cd04301">
    <property type="entry name" value="NAT_SF"/>
    <property type="match status" value="1"/>
</dbReference>
<dbReference type="Gene3D" id="3.40.630.30">
    <property type="match status" value="1"/>
</dbReference>
<dbReference type="HAMAP" id="MF_01698">
    <property type="entry name" value="MshD"/>
    <property type="match status" value="1"/>
</dbReference>
<dbReference type="InterPro" id="IPR016181">
    <property type="entry name" value="Acyl_CoA_acyltransferase"/>
</dbReference>
<dbReference type="InterPro" id="IPR050832">
    <property type="entry name" value="Bact_Acetyltransf"/>
</dbReference>
<dbReference type="InterPro" id="IPR000182">
    <property type="entry name" value="GNAT_dom"/>
</dbReference>
<dbReference type="InterPro" id="IPR017813">
    <property type="entry name" value="Mycothiol_AcTrfase"/>
</dbReference>
<dbReference type="NCBIfam" id="TIGR03448">
    <property type="entry name" value="mycothiol_MshD"/>
    <property type="match status" value="1"/>
</dbReference>
<dbReference type="PANTHER" id="PTHR43877">
    <property type="entry name" value="AMINOALKYLPHOSPHONATE N-ACETYLTRANSFERASE-RELATED-RELATED"/>
    <property type="match status" value="1"/>
</dbReference>
<dbReference type="Pfam" id="PF00583">
    <property type="entry name" value="Acetyltransf_1"/>
    <property type="match status" value="2"/>
</dbReference>
<dbReference type="PIRSF" id="PIRSF021524">
    <property type="entry name" value="MSH_acetyltransferase"/>
    <property type="match status" value="1"/>
</dbReference>
<dbReference type="SUPFAM" id="SSF55729">
    <property type="entry name" value="Acyl-CoA N-acyltransferases (Nat)"/>
    <property type="match status" value="1"/>
</dbReference>
<dbReference type="PROSITE" id="PS51186">
    <property type="entry name" value="GNAT"/>
    <property type="match status" value="2"/>
</dbReference>
<keyword id="KW-0012">Acyltransferase</keyword>
<keyword id="KW-1185">Reference proteome</keyword>
<keyword id="KW-0677">Repeat</keyword>
<keyword id="KW-0808">Transferase</keyword>
<proteinExistence type="inferred from homology"/>
<sequence length="297" mass="32430">MDERALVFSDGLTDPQISQVLALAEAATRHDGVAPLSEQALLTLRAGRSRSLLSLEDGVIAGYAHLDPAPDGAGASGEVVVHPGRRRRGHGRALLRALRERARGPLRVWAHGDLAPAAALAAAEGMARVRVLLQMRRPLQDSPLPEVTVPDGVTIRTFEPGRDETAWLRVNGRAFADHPEQGAWTLEDLRARQAEPWFDPAGLFLAERDGRLIGFHWTKVHPDPIGEVYVVGVDPSAQGLGLGRVLTLIGLHHLRDRGLPAVMLYVDESNRPALRLYESLGFTRYAVDVMYQSPPPH</sequence>